<reference key="1">
    <citation type="journal article" date="2003" name="Arch. Biochem. Biophys.">
        <title>Geographic variations, cloning, and functional analyses of the venom acidic phospholipases A2 of Crotalus viridis viridis.</title>
        <authorList>
            <person name="Tsai I.-H."/>
            <person name="Wang Y.-M."/>
            <person name="Chen Y.-H."/>
            <person name="Tu A.T."/>
        </authorList>
    </citation>
    <scope>NUCLEOTIDE SEQUENCE [MRNA]</scope>
    <source>
        <tissue>Venom gland</tissue>
    </source>
</reference>
<dbReference type="EC" id="3.1.1.4"/>
<dbReference type="EMBL" id="AF403137">
    <property type="protein sequence ID" value="AAO93140.1"/>
    <property type="molecule type" value="mRNA"/>
</dbReference>
<dbReference type="SMR" id="Q800C1"/>
<dbReference type="GO" id="GO:0005576">
    <property type="term" value="C:extracellular region"/>
    <property type="evidence" value="ECO:0007669"/>
    <property type="project" value="UniProtKB-SubCell"/>
</dbReference>
<dbReference type="GO" id="GO:0005509">
    <property type="term" value="F:calcium ion binding"/>
    <property type="evidence" value="ECO:0007669"/>
    <property type="project" value="InterPro"/>
</dbReference>
<dbReference type="GO" id="GO:0047498">
    <property type="term" value="F:calcium-dependent phospholipase A2 activity"/>
    <property type="evidence" value="ECO:0007669"/>
    <property type="project" value="TreeGrafter"/>
</dbReference>
<dbReference type="GO" id="GO:0005543">
    <property type="term" value="F:phospholipid binding"/>
    <property type="evidence" value="ECO:0007669"/>
    <property type="project" value="TreeGrafter"/>
</dbReference>
<dbReference type="GO" id="GO:0090729">
    <property type="term" value="F:toxin activity"/>
    <property type="evidence" value="ECO:0007669"/>
    <property type="project" value="UniProtKB-KW"/>
</dbReference>
<dbReference type="GO" id="GO:0050482">
    <property type="term" value="P:arachidonate secretion"/>
    <property type="evidence" value="ECO:0007669"/>
    <property type="project" value="InterPro"/>
</dbReference>
<dbReference type="GO" id="GO:0016042">
    <property type="term" value="P:lipid catabolic process"/>
    <property type="evidence" value="ECO:0007669"/>
    <property type="project" value="UniProtKB-KW"/>
</dbReference>
<dbReference type="GO" id="GO:0042130">
    <property type="term" value="P:negative regulation of T cell proliferation"/>
    <property type="evidence" value="ECO:0007669"/>
    <property type="project" value="TreeGrafter"/>
</dbReference>
<dbReference type="GO" id="GO:0006644">
    <property type="term" value="P:phospholipid metabolic process"/>
    <property type="evidence" value="ECO:0007669"/>
    <property type="project" value="InterPro"/>
</dbReference>
<dbReference type="CDD" id="cd00125">
    <property type="entry name" value="PLA2c"/>
    <property type="match status" value="1"/>
</dbReference>
<dbReference type="FunFam" id="1.20.90.10:FF:000001">
    <property type="entry name" value="Basic phospholipase A2 homolog"/>
    <property type="match status" value="1"/>
</dbReference>
<dbReference type="Gene3D" id="1.20.90.10">
    <property type="entry name" value="Phospholipase A2 domain"/>
    <property type="match status" value="1"/>
</dbReference>
<dbReference type="InterPro" id="IPR001211">
    <property type="entry name" value="PLipase_A2"/>
</dbReference>
<dbReference type="InterPro" id="IPR033112">
    <property type="entry name" value="PLipase_A2_Asp_AS"/>
</dbReference>
<dbReference type="InterPro" id="IPR016090">
    <property type="entry name" value="PLipase_A2_dom"/>
</dbReference>
<dbReference type="InterPro" id="IPR036444">
    <property type="entry name" value="PLipase_A2_dom_sf"/>
</dbReference>
<dbReference type="InterPro" id="IPR033113">
    <property type="entry name" value="PLipase_A2_His_AS"/>
</dbReference>
<dbReference type="PANTHER" id="PTHR11716">
    <property type="entry name" value="PHOSPHOLIPASE A2 FAMILY MEMBER"/>
    <property type="match status" value="1"/>
</dbReference>
<dbReference type="PANTHER" id="PTHR11716:SF9">
    <property type="entry name" value="PHOSPHOLIPASE A2, MEMBRANE ASSOCIATED"/>
    <property type="match status" value="1"/>
</dbReference>
<dbReference type="Pfam" id="PF00068">
    <property type="entry name" value="Phospholip_A2_1"/>
    <property type="match status" value="1"/>
</dbReference>
<dbReference type="PRINTS" id="PR00389">
    <property type="entry name" value="PHPHLIPASEA2"/>
</dbReference>
<dbReference type="SMART" id="SM00085">
    <property type="entry name" value="PA2c"/>
    <property type="match status" value="1"/>
</dbReference>
<dbReference type="SUPFAM" id="SSF48619">
    <property type="entry name" value="Phospholipase A2, PLA2"/>
    <property type="match status" value="1"/>
</dbReference>
<dbReference type="PROSITE" id="PS00119">
    <property type="entry name" value="PA2_ASP"/>
    <property type="match status" value="1"/>
</dbReference>
<dbReference type="PROSITE" id="PS00118">
    <property type="entry name" value="PA2_HIS"/>
    <property type="match status" value="1"/>
</dbReference>
<comment type="function">
    <text evidence="1">Snake venom phospholipase A2 (PLA2) that shows very low inhibition of ADP-induced platelet aggregation in platelet-rich plasma of human, rabbit and guinea pig. In vivo, shows efficient edema-inducing activities in rat paws. PLA2 catalyzes the calcium-dependent hydrolysis of the 2-acyl groups in 3-sn-phosphoglycerides (By similarity).</text>
</comment>
<comment type="catalytic activity">
    <reaction evidence="3 4">
        <text>a 1,2-diacyl-sn-glycero-3-phosphocholine + H2O = a 1-acyl-sn-glycero-3-phosphocholine + a fatty acid + H(+)</text>
        <dbReference type="Rhea" id="RHEA:15801"/>
        <dbReference type="ChEBI" id="CHEBI:15377"/>
        <dbReference type="ChEBI" id="CHEBI:15378"/>
        <dbReference type="ChEBI" id="CHEBI:28868"/>
        <dbReference type="ChEBI" id="CHEBI:57643"/>
        <dbReference type="ChEBI" id="CHEBI:58168"/>
        <dbReference type="EC" id="3.1.1.4"/>
    </reaction>
</comment>
<comment type="cofactor">
    <cofactor evidence="1">
        <name>Ca(2+)</name>
        <dbReference type="ChEBI" id="CHEBI:29108"/>
    </cofactor>
    <text evidence="1">Binds 1 Ca(2+) ion.</text>
</comment>
<comment type="subcellular location">
    <subcellularLocation>
        <location evidence="1">Secreted</location>
    </subcellularLocation>
</comment>
<comment type="tissue specificity">
    <text>Expressed by the venom gland.</text>
</comment>
<comment type="similarity">
    <text evidence="5">Belongs to the phospholipase A2 family. Group II subfamily. D49 sub-subfamily.</text>
</comment>
<comment type="caution">
    <text evidence="6">Is possibly a hybrid of Cvv-E6a and Cvv-E6f. The hybrid-like PLAs have never been expressed or purified in the venoms for all the cases so far studied. Therefore regulation mechanisms must exist to halt translation or secretion of the proteins in the venom glands (PubMed:12623078).</text>
</comment>
<organism>
    <name type="scientific">Crotalus viridis viridis</name>
    <name type="common">Prairie rattlesnake</name>
    <dbReference type="NCBI Taxonomy" id="8742"/>
    <lineage>
        <taxon>Eukaryota</taxon>
        <taxon>Metazoa</taxon>
        <taxon>Chordata</taxon>
        <taxon>Craniata</taxon>
        <taxon>Vertebrata</taxon>
        <taxon>Euteleostomi</taxon>
        <taxon>Lepidosauria</taxon>
        <taxon>Squamata</taxon>
        <taxon>Bifurcata</taxon>
        <taxon>Unidentata</taxon>
        <taxon>Episquamata</taxon>
        <taxon>Toxicofera</taxon>
        <taxon>Serpentes</taxon>
        <taxon>Colubroidea</taxon>
        <taxon>Viperidae</taxon>
        <taxon>Crotalinae</taxon>
        <taxon>Crotalus</taxon>
    </lineage>
</organism>
<keyword id="KW-0106">Calcium</keyword>
<keyword id="KW-1015">Disulfide bond</keyword>
<keyword id="KW-1199">Hemostasis impairing toxin</keyword>
<keyword id="KW-0378">Hydrolase</keyword>
<keyword id="KW-0442">Lipid degradation</keyword>
<keyword id="KW-0443">Lipid metabolism</keyword>
<keyword id="KW-0479">Metal-binding</keyword>
<keyword id="KW-1201">Platelet aggregation inhibiting toxin</keyword>
<keyword id="KW-0964">Secreted</keyword>
<keyword id="KW-0732">Signal</keyword>
<keyword id="KW-0800">Toxin</keyword>
<proteinExistence type="evidence at transcript level"/>
<name>PA2AH_CROVV</name>
<feature type="signal peptide" evidence="2">
    <location>
        <begin position="1"/>
        <end position="16"/>
    </location>
</feature>
<feature type="chain" id="PRO_0000418560" description="Acidic phospholipase A2 Cvv-E6h">
    <location>
        <begin position="17"/>
        <end position="138"/>
    </location>
</feature>
<feature type="active site" evidence="1">
    <location>
        <position position="63"/>
    </location>
</feature>
<feature type="active site" evidence="1">
    <location>
        <position position="105"/>
    </location>
</feature>
<feature type="binding site" evidence="1">
    <location>
        <position position="43"/>
    </location>
    <ligand>
        <name>Ca(2+)</name>
        <dbReference type="ChEBI" id="CHEBI:29108"/>
    </ligand>
</feature>
<feature type="binding site" evidence="1">
    <location>
        <position position="45"/>
    </location>
    <ligand>
        <name>Ca(2+)</name>
        <dbReference type="ChEBI" id="CHEBI:29108"/>
    </ligand>
</feature>
<feature type="binding site" evidence="1">
    <location>
        <position position="47"/>
    </location>
    <ligand>
        <name>Ca(2+)</name>
        <dbReference type="ChEBI" id="CHEBI:29108"/>
    </ligand>
</feature>
<feature type="binding site" evidence="1">
    <location>
        <position position="64"/>
    </location>
    <ligand>
        <name>Ca(2+)</name>
        <dbReference type="ChEBI" id="CHEBI:29108"/>
    </ligand>
</feature>
<feature type="disulfide bond" evidence="1">
    <location>
        <begin position="42"/>
        <end position="131"/>
    </location>
</feature>
<feature type="disulfide bond" evidence="1">
    <location>
        <begin position="44"/>
        <end position="60"/>
    </location>
</feature>
<feature type="disulfide bond" evidence="1">
    <location>
        <begin position="59"/>
        <end position="111"/>
    </location>
</feature>
<feature type="disulfide bond" evidence="1">
    <location>
        <begin position="65"/>
        <end position="138"/>
    </location>
</feature>
<feature type="disulfide bond" evidence="1">
    <location>
        <begin position="66"/>
        <end position="104"/>
    </location>
</feature>
<feature type="disulfide bond" evidence="1">
    <location>
        <begin position="73"/>
        <end position="97"/>
    </location>
</feature>
<feature type="disulfide bond" evidence="1">
    <location>
        <begin position="91"/>
        <end position="102"/>
    </location>
</feature>
<sequence>MRTLWIVAVLLLGVEGSLVQFETLIMKIAGRSGLLWYSAYGCYCGWGGHGLPQDATDRCCFVHDCCYGKATDCNPKTVSYTYSVKNGEIICEDDDPCKRQVCECDRVAAVCFRDNIPSYNNNYKRFPAENCREEPEPC</sequence>
<protein>
    <recommendedName>
        <fullName>Acidic phospholipase A2 Cvv-E6h</fullName>
        <shortName>svPLA2</shortName>
        <ecNumber>3.1.1.4</ecNumber>
    </recommendedName>
    <alternativeName>
        <fullName>Phosphatidylcholine 2-acylhydrolase</fullName>
    </alternativeName>
</protein>
<accession>Q800C1</accession>
<evidence type="ECO:0000250" key="1"/>
<evidence type="ECO:0000255" key="2"/>
<evidence type="ECO:0000255" key="3">
    <source>
        <dbReference type="PROSITE-ProRule" id="PRU10035"/>
    </source>
</evidence>
<evidence type="ECO:0000255" key="4">
    <source>
        <dbReference type="PROSITE-ProRule" id="PRU10036"/>
    </source>
</evidence>
<evidence type="ECO:0000305" key="5"/>
<evidence type="ECO:0000305" key="6">
    <source>
    </source>
</evidence>